<dbReference type="EC" id="3.2.1.14"/>
<dbReference type="EMBL" id="Y14590">
    <property type="protein sequence ID" value="CAA74930.1"/>
    <property type="molecule type" value="Genomic_DNA"/>
</dbReference>
<dbReference type="EMBL" id="AL132971">
    <property type="protein sequence ID" value="CAB81807.1"/>
    <property type="molecule type" value="Genomic_DNA"/>
</dbReference>
<dbReference type="EMBL" id="CP002686">
    <property type="protein sequence ID" value="AEE79228.1"/>
    <property type="molecule type" value="Genomic_DNA"/>
</dbReference>
<dbReference type="EMBL" id="BT010422">
    <property type="protein sequence ID" value="AAQ62423.1"/>
    <property type="molecule type" value="mRNA"/>
</dbReference>
<dbReference type="EMBL" id="AK176488">
    <property type="protein sequence ID" value="BAD44251.1"/>
    <property type="molecule type" value="mRNA"/>
</dbReference>
<dbReference type="EMBL" id="Z26409">
    <property type="protein sequence ID" value="CAA81243.1"/>
    <property type="status" value="ALT_INIT"/>
    <property type="molecule type" value="mRNA"/>
</dbReference>
<dbReference type="PIR" id="T47601">
    <property type="entry name" value="T47601"/>
</dbReference>
<dbReference type="RefSeq" id="NP_191010.1">
    <property type="nucleotide sequence ID" value="NM_115302.3"/>
</dbReference>
<dbReference type="SMR" id="Q9M2U5"/>
<dbReference type="FunCoup" id="Q9M2U5">
    <property type="interactions" value="146"/>
</dbReference>
<dbReference type="STRING" id="3702.Q9M2U5"/>
<dbReference type="CAZy" id="CBM18">
    <property type="family name" value="Carbohydrate-Binding Module Family 18"/>
</dbReference>
<dbReference type="CAZy" id="GH19">
    <property type="family name" value="Glycoside Hydrolase Family 19"/>
</dbReference>
<dbReference type="GlyCosmos" id="Q9M2U5">
    <property type="glycosylation" value="4 sites, No reported glycans"/>
</dbReference>
<dbReference type="GlyGen" id="Q9M2U5">
    <property type="glycosylation" value="4 sites"/>
</dbReference>
<dbReference type="PaxDb" id="3702-AT3G54420.1"/>
<dbReference type="ProteomicsDB" id="245186"/>
<dbReference type="EnsemblPlants" id="AT3G54420.1">
    <property type="protein sequence ID" value="AT3G54420.1"/>
    <property type="gene ID" value="AT3G54420"/>
</dbReference>
<dbReference type="GeneID" id="824608"/>
<dbReference type="Gramene" id="AT3G54420.1">
    <property type="protein sequence ID" value="AT3G54420.1"/>
    <property type="gene ID" value="AT3G54420"/>
</dbReference>
<dbReference type="KEGG" id="ath:AT3G54420"/>
<dbReference type="Araport" id="AT3G54420"/>
<dbReference type="TAIR" id="AT3G54420">
    <property type="gene designation" value="EP3"/>
</dbReference>
<dbReference type="eggNOG" id="KOG4742">
    <property type="taxonomic scope" value="Eukaryota"/>
</dbReference>
<dbReference type="HOGENOM" id="CLU_045506_1_1_1"/>
<dbReference type="InParanoid" id="Q9M2U5"/>
<dbReference type="OMA" id="PDLVQND"/>
<dbReference type="OrthoDB" id="5985073at2759"/>
<dbReference type="PhylomeDB" id="Q9M2U5"/>
<dbReference type="BioCyc" id="ARA:AT3G54420-MONOMER"/>
<dbReference type="PRO" id="PR:Q9M2U5"/>
<dbReference type="Proteomes" id="UP000006548">
    <property type="component" value="Chromosome 3"/>
</dbReference>
<dbReference type="ExpressionAtlas" id="Q9M2U5">
    <property type="expression patterns" value="baseline and differential"/>
</dbReference>
<dbReference type="GO" id="GO:0008061">
    <property type="term" value="F:chitin binding"/>
    <property type="evidence" value="ECO:0007669"/>
    <property type="project" value="UniProtKB-KW"/>
</dbReference>
<dbReference type="GO" id="GO:0004568">
    <property type="term" value="F:chitinase activity"/>
    <property type="evidence" value="ECO:0000250"/>
    <property type="project" value="TAIR"/>
</dbReference>
<dbReference type="GO" id="GO:0008843">
    <property type="term" value="F:endochitinase activity"/>
    <property type="evidence" value="ECO:0007669"/>
    <property type="project" value="UniProtKB-EC"/>
</dbReference>
<dbReference type="GO" id="GO:0016998">
    <property type="term" value="P:cell wall macromolecule catabolic process"/>
    <property type="evidence" value="ECO:0007669"/>
    <property type="project" value="InterPro"/>
</dbReference>
<dbReference type="GO" id="GO:0006032">
    <property type="term" value="P:chitin catabolic process"/>
    <property type="evidence" value="ECO:0007669"/>
    <property type="project" value="UniProtKB-KW"/>
</dbReference>
<dbReference type="GO" id="GO:0006952">
    <property type="term" value="P:defense response"/>
    <property type="evidence" value="ECO:0007669"/>
    <property type="project" value="UniProtKB-KW"/>
</dbReference>
<dbReference type="GO" id="GO:0000272">
    <property type="term" value="P:polysaccharide catabolic process"/>
    <property type="evidence" value="ECO:0007669"/>
    <property type="project" value="UniProtKB-KW"/>
</dbReference>
<dbReference type="GO" id="GO:0009617">
    <property type="term" value="P:response to bacterium"/>
    <property type="evidence" value="ECO:0000270"/>
    <property type="project" value="UniProtKB"/>
</dbReference>
<dbReference type="GO" id="GO:0009611">
    <property type="term" value="P:response to wounding"/>
    <property type="evidence" value="ECO:0000270"/>
    <property type="project" value="UniProtKB"/>
</dbReference>
<dbReference type="GO" id="GO:0010262">
    <property type="term" value="P:somatic embryogenesis"/>
    <property type="evidence" value="ECO:0000270"/>
    <property type="project" value="TAIR"/>
</dbReference>
<dbReference type="CDD" id="cd00325">
    <property type="entry name" value="chitinase_GH19"/>
    <property type="match status" value="1"/>
</dbReference>
<dbReference type="CDD" id="cd00035">
    <property type="entry name" value="ChtBD1"/>
    <property type="match status" value="1"/>
</dbReference>
<dbReference type="FunFam" id="3.30.60.10:FF:000003">
    <property type="entry name" value="Class IV chitinase"/>
    <property type="match status" value="1"/>
</dbReference>
<dbReference type="FunFam" id="3.30.20.10:FF:000001">
    <property type="entry name" value="Endochitinase (Chitinase)"/>
    <property type="match status" value="1"/>
</dbReference>
<dbReference type="FunFam" id="1.10.530.10:FF:000052">
    <property type="entry name" value="Endochitinase PR4"/>
    <property type="match status" value="1"/>
</dbReference>
<dbReference type="Gene3D" id="1.10.530.10">
    <property type="match status" value="1"/>
</dbReference>
<dbReference type="Gene3D" id="3.30.20.10">
    <property type="entry name" value="Endochitinase, domain 2"/>
    <property type="match status" value="1"/>
</dbReference>
<dbReference type="Gene3D" id="3.30.60.10">
    <property type="entry name" value="Endochitinase-like"/>
    <property type="match status" value="1"/>
</dbReference>
<dbReference type="InterPro" id="IPR001002">
    <property type="entry name" value="Chitin-bd_1"/>
</dbReference>
<dbReference type="InterPro" id="IPR018371">
    <property type="entry name" value="Chitin-binding_1_CS"/>
</dbReference>
<dbReference type="InterPro" id="IPR036861">
    <property type="entry name" value="Endochitinase-like_sf"/>
</dbReference>
<dbReference type="InterPro" id="IPR016283">
    <property type="entry name" value="Glyco_hydro_19"/>
</dbReference>
<dbReference type="InterPro" id="IPR000726">
    <property type="entry name" value="Glyco_hydro_19_cat"/>
</dbReference>
<dbReference type="InterPro" id="IPR023346">
    <property type="entry name" value="Lysozyme-like_dom_sf"/>
</dbReference>
<dbReference type="PANTHER" id="PTHR22595">
    <property type="entry name" value="CHITINASE-RELATED"/>
    <property type="match status" value="1"/>
</dbReference>
<dbReference type="PANTHER" id="PTHR22595:SF193">
    <property type="entry name" value="ENDOCHITINASE EP3"/>
    <property type="match status" value="1"/>
</dbReference>
<dbReference type="Pfam" id="PF00187">
    <property type="entry name" value="Chitin_bind_1"/>
    <property type="match status" value="1"/>
</dbReference>
<dbReference type="Pfam" id="PF00182">
    <property type="entry name" value="Glyco_hydro_19"/>
    <property type="match status" value="2"/>
</dbReference>
<dbReference type="PIRSF" id="PIRSF001060">
    <property type="entry name" value="Endochitinase"/>
    <property type="match status" value="1"/>
</dbReference>
<dbReference type="PRINTS" id="PR00451">
    <property type="entry name" value="CHITINBINDNG"/>
</dbReference>
<dbReference type="SMART" id="SM00270">
    <property type="entry name" value="ChtBD1"/>
    <property type="match status" value="1"/>
</dbReference>
<dbReference type="SUPFAM" id="SSF53955">
    <property type="entry name" value="Lysozyme-like"/>
    <property type="match status" value="1"/>
</dbReference>
<dbReference type="SUPFAM" id="SSF57016">
    <property type="entry name" value="Plant lectins/antimicrobial peptides"/>
    <property type="match status" value="1"/>
</dbReference>
<dbReference type="PROSITE" id="PS00026">
    <property type="entry name" value="CHIT_BIND_I_1"/>
    <property type="match status" value="1"/>
</dbReference>
<dbReference type="PROSITE" id="PS50941">
    <property type="entry name" value="CHIT_BIND_I_2"/>
    <property type="match status" value="1"/>
</dbReference>
<dbReference type="PROSITE" id="PS00773">
    <property type="entry name" value="CHITINASE_19_1"/>
    <property type="match status" value="1"/>
</dbReference>
<protein>
    <recommendedName>
        <fullName evidence="8">Endochitinase EP3</fullName>
        <ecNumber>3.2.1.14</ecNumber>
    </recommendedName>
    <alternativeName>
        <fullName evidence="8">Chitinase class IV</fullName>
        <shortName evidence="8">AtchitIV</shortName>
    </alternativeName>
    <alternativeName>
        <fullName evidence="8">Protein HOMOLOG OF CARROT EP3-3 CHITINASE</fullName>
        <shortName evidence="8">AtEP3</shortName>
    </alternativeName>
</protein>
<evidence type="ECO:0000250" key="1">
    <source>
        <dbReference type="UniProtKB" id="P29022"/>
    </source>
</evidence>
<evidence type="ECO:0000255" key="2"/>
<evidence type="ECO:0000255" key="3">
    <source>
        <dbReference type="PROSITE-ProRule" id="PRU00261"/>
    </source>
</evidence>
<evidence type="ECO:0000255" key="4">
    <source>
        <dbReference type="PROSITE-ProRule" id="PRU00498"/>
    </source>
</evidence>
<evidence type="ECO:0000269" key="5">
    <source>
    </source>
</evidence>
<evidence type="ECO:0000269" key="6">
    <source>
    </source>
</evidence>
<evidence type="ECO:0000269" key="7">
    <source>
    </source>
</evidence>
<evidence type="ECO:0000303" key="8">
    <source>
    </source>
</evidence>
<evidence type="ECO:0000305" key="9"/>
<evidence type="ECO:0000312" key="10">
    <source>
        <dbReference type="EMBL" id="AEE79228.1"/>
    </source>
</evidence>
<evidence type="ECO:0000312" key="11">
    <source>
        <dbReference type="EMBL" id="CAB81807.1"/>
    </source>
</evidence>
<evidence type="ECO:0000312" key="12">
    <source>
        <dbReference type="Proteomes" id="UP000006548"/>
    </source>
</evidence>
<organism evidence="12">
    <name type="scientific">Arabidopsis thaliana</name>
    <name type="common">Mouse-ear cress</name>
    <dbReference type="NCBI Taxonomy" id="3702"/>
    <lineage>
        <taxon>Eukaryota</taxon>
        <taxon>Viridiplantae</taxon>
        <taxon>Streptophyta</taxon>
        <taxon>Embryophyta</taxon>
        <taxon>Tracheophyta</taxon>
        <taxon>Spermatophyta</taxon>
        <taxon>Magnoliopsida</taxon>
        <taxon>eudicotyledons</taxon>
        <taxon>Gunneridae</taxon>
        <taxon>Pentapetalae</taxon>
        <taxon>rosids</taxon>
        <taxon>malvids</taxon>
        <taxon>Brassicales</taxon>
        <taxon>Brassicaceae</taxon>
        <taxon>Camelineae</taxon>
        <taxon>Arabidopsis</taxon>
    </lineage>
</organism>
<comment type="function">
    <text evidence="7">Probably involved in hypersensitive reaction upon Xanthomonas campestris infection.</text>
</comment>
<comment type="catalytic activity">
    <reaction evidence="1">
        <text>Random endo-hydrolysis of N-acetyl-beta-D-glucosaminide (1-&gt;4)-beta-linkages in chitin and chitodextrins.</text>
        <dbReference type="EC" id="3.2.1.14"/>
    </reaction>
</comment>
<comment type="biophysicochemical properties">
    <phDependence>
        <text evidence="5">Optimum pH is 4.8.</text>
    </phDependence>
</comment>
<comment type="tissue specificity">
    <text evidence="5 6 7">Expressed in cells surrounding embryos, stems, seedlings, pollen, roots, shoots, inflorescence, flowers, siliques and leaves (PubMed:11525512, PubMed:19420714). Present in seedpods and seed embryos, but not in roots, inflorescence stems, leaves and flowers (PubMed:9426222).</text>
</comment>
<comment type="developmental stage">
    <text evidence="5">Expressed during somatic embryogenesis in nursing cells surrounding the embryos but not in embryos. Accumulates in mature pollen and growing pollen tubes until they enter the receptive synergid, but not in endosperm and integuments. In adult plants, present in hydathodes, stipules, root epidermis and emerging root hairs.</text>
</comment>
<comment type="induction">
    <text evidence="6 7">Accumulates rapidly and transiently in leaves after inoculation with Xanthomonas campestris (PubMed:9426222). Slightly repressed by wounding (PubMed:19420714).</text>
</comment>
<comment type="similarity">
    <text evidence="9">Belongs to the glycosyl hydrolase 19 family. Chitinase class I subfamily.</text>
</comment>
<comment type="sequence caution" evidence="9">
    <conflict type="erroneous initiation">
        <sequence resource="EMBL-CDS" id="CAA81243"/>
    </conflict>
    <text>Extended N-terminus.</text>
</comment>
<gene>
    <name evidence="8" type="primary">EP3</name>
    <name evidence="8" type="synonym">CHIV</name>
    <name evidence="10" type="ordered locus">At3g54420</name>
    <name evidence="11" type="ORF">T12E18.110</name>
</gene>
<proteinExistence type="evidence at protein level"/>
<accession>Q9M2U5</accession>
<accession>O23248</accession>
<accession>Q42085</accession>
<reference key="1">
    <citation type="journal article" date="1997" name="FEBS Lett.">
        <title>Arabidopsis thaliana class IV chitinase is early induced during the interaction with Xanthomonas campestris.</title>
        <authorList>
            <person name="Gerhardt L.B.A."/>
            <person name="Sachetto-Martins G."/>
            <person name="Contarini M.G."/>
            <person name="Sandroni M."/>
            <person name="Ferreira R.P."/>
            <person name="de Lima V.M."/>
            <person name="Cordeiro M.C."/>
            <person name="de Oliveira D.E."/>
            <person name="Margis-Pinheiro M."/>
        </authorList>
    </citation>
    <scope>NUCLEOTIDE SEQUENCE [GENOMIC DNA]</scope>
    <scope>FUNCTION</scope>
    <scope>TISSUE SPECIFICITY</scope>
    <scope>INDUCTION BY XANTHOMONAS CAMPESTRIS</scope>
    <source>
        <strain>cv. Columbia</strain>
    </source>
</reference>
<reference key="2">
    <citation type="journal article" date="2000" name="Nature">
        <title>Sequence and analysis of chromosome 3 of the plant Arabidopsis thaliana.</title>
        <authorList>
            <person name="Salanoubat M."/>
            <person name="Lemcke K."/>
            <person name="Rieger M."/>
            <person name="Ansorge W."/>
            <person name="Unseld M."/>
            <person name="Fartmann B."/>
            <person name="Valle G."/>
            <person name="Bloecker H."/>
            <person name="Perez-Alonso M."/>
            <person name="Obermaier B."/>
            <person name="Delseny M."/>
            <person name="Boutry M."/>
            <person name="Grivell L.A."/>
            <person name="Mache R."/>
            <person name="Puigdomenech P."/>
            <person name="De Simone V."/>
            <person name="Choisne N."/>
            <person name="Artiguenave F."/>
            <person name="Robert C."/>
            <person name="Brottier P."/>
            <person name="Wincker P."/>
            <person name="Cattolico L."/>
            <person name="Weissenbach J."/>
            <person name="Saurin W."/>
            <person name="Quetier F."/>
            <person name="Schaefer M."/>
            <person name="Mueller-Auer S."/>
            <person name="Gabel C."/>
            <person name="Fuchs M."/>
            <person name="Benes V."/>
            <person name="Wurmbach E."/>
            <person name="Drzonek H."/>
            <person name="Erfle H."/>
            <person name="Jordan N."/>
            <person name="Bangert S."/>
            <person name="Wiedelmann R."/>
            <person name="Kranz H."/>
            <person name="Voss H."/>
            <person name="Holland R."/>
            <person name="Brandt P."/>
            <person name="Nyakatura G."/>
            <person name="Vezzi A."/>
            <person name="D'Angelo M."/>
            <person name="Pallavicini A."/>
            <person name="Toppo S."/>
            <person name="Simionati B."/>
            <person name="Conrad A."/>
            <person name="Hornischer K."/>
            <person name="Kauer G."/>
            <person name="Loehnert T.-H."/>
            <person name="Nordsiek G."/>
            <person name="Reichelt J."/>
            <person name="Scharfe M."/>
            <person name="Schoen O."/>
            <person name="Bargues M."/>
            <person name="Terol J."/>
            <person name="Climent J."/>
            <person name="Navarro P."/>
            <person name="Collado C."/>
            <person name="Perez-Perez A."/>
            <person name="Ottenwaelder B."/>
            <person name="Duchemin D."/>
            <person name="Cooke R."/>
            <person name="Laudie M."/>
            <person name="Berger-Llauro C."/>
            <person name="Purnelle B."/>
            <person name="Masuy D."/>
            <person name="de Haan M."/>
            <person name="Maarse A.C."/>
            <person name="Alcaraz J.-P."/>
            <person name="Cottet A."/>
            <person name="Casacuberta E."/>
            <person name="Monfort A."/>
            <person name="Argiriou A."/>
            <person name="Flores M."/>
            <person name="Liguori R."/>
            <person name="Vitale D."/>
            <person name="Mannhaupt G."/>
            <person name="Haase D."/>
            <person name="Schoof H."/>
            <person name="Rudd S."/>
            <person name="Zaccaria P."/>
            <person name="Mewes H.-W."/>
            <person name="Mayer K.F.X."/>
            <person name="Kaul S."/>
            <person name="Town C.D."/>
            <person name="Koo H.L."/>
            <person name="Tallon L.J."/>
            <person name="Jenkins J."/>
            <person name="Rooney T."/>
            <person name="Rizzo M."/>
            <person name="Walts A."/>
            <person name="Utterback T."/>
            <person name="Fujii C.Y."/>
            <person name="Shea T.P."/>
            <person name="Creasy T.H."/>
            <person name="Haas B."/>
            <person name="Maiti R."/>
            <person name="Wu D."/>
            <person name="Peterson J."/>
            <person name="Van Aken S."/>
            <person name="Pai G."/>
            <person name="Militscher J."/>
            <person name="Sellers P."/>
            <person name="Gill J.E."/>
            <person name="Feldblyum T.V."/>
            <person name="Preuss D."/>
            <person name="Lin X."/>
            <person name="Nierman W.C."/>
            <person name="Salzberg S.L."/>
            <person name="White O."/>
            <person name="Venter J.C."/>
            <person name="Fraser C.M."/>
            <person name="Kaneko T."/>
            <person name="Nakamura Y."/>
            <person name="Sato S."/>
            <person name="Kato T."/>
            <person name="Asamizu E."/>
            <person name="Sasamoto S."/>
            <person name="Kimura T."/>
            <person name="Idesawa K."/>
            <person name="Kawashima K."/>
            <person name="Kishida Y."/>
            <person name="Kiyokawa C."/>
            <person name="Kohara M."/>
            <person name="Matsumoto M."/>
            <person name="Matsuno A."/>
            <person name="Muraki A."/>
            <person name="Nakayama S."/>
            <person name="Nakazaki N."/>
            <person name="Shinpo S."/>
            <person name="Takeuchi C."/>
            <person name="Wada T."/>
            <person name="Watanabe A."/>
            <person name="Yamada M."/>
            <person name="Yasuda M."/>
            <person name="Tabata S."/>
        </authorList>
    </citation>
    <scope>NUCLEOTIDE SEQUENCE [LARGE SCALE GENOMIC DNA]</scope>
    <source>
        <strain>cv. Columbia</strain>
    </source>
</reference>
<reference key="3">
    <citation type="journal article" date="2017" name="Plant J.">
        <title>Araport11: a complete reannotation of the Arabidopsis thaliana reference genome.</title>
        <authorList>
            <person name="Cheng C.Y."/>
            <person name="Krishnakumar V."/>
            <person name="Chan A.P."/>
            <person name="Thibaud-Nissen F."/>
            <person name="Schobel S."/>
            <person name="Town C.D."/>
        </authorList>
    </citation>
    <scope>GENOME REANNOTATION</scope>
    <source>
        <strain>cv. Columbia</strain>
    </source>
</reference>
<reference key="4">
    <citation type="journal article" date="2003" name="Science">
        <title>Empirical analysis of transcriptional activity in the Arabidopsis genome.</title>
        <authorList>
            <person name="Yamada K."/>
            <person name="Lim J."/>
            <person name="Dale J.M."/>
            <person name="Chen H."/>
            <person name="Shinn P."/>
            <person name="Palm C.J."/>
            <person name="Southwick A.M."/>
            <person name="Wu H.C."/>
            <person name="Kim C.J."/>
            <person name="Nguyen M."/>
            <person name="Pham P.K."/>
            <person name="Cheuk R.F."/>
            <person name="Karlin-Newmann G."/>
            <person name="Liu S.X."/>
            <person name="Lam B."/>
            <person name="Sakano H."/>
            <person name="Wu T."/>
            <person name="Yu G."/>
            <person name="Miranda M."/>
            <person name="Quach H.L."/>
            <person name="Tripp M."/>
            <person name="Chang C.H."/>
            <person name="Lee J.M."/>
            <person name="Toriumi M.J."/>
            <person name="Chan M.M."/>
            <person name="Tang C.C."/>
            <person name="Onodera C.S."/>
            <person name="Deng J.M."/>
            <person name="Akiyama K."/>
            <person name="Ansari Y."/>
            <person name="Arakawa T."/>
            <person name="Banh J."/>
            <person name="Banno F."/>
            <person name="Bowser L."/>
            <person name="Brooks S.Y."/>
            <person name="Carninci P."/>
            <person name="Chao Q."/>
            <person name="Choy N."/>
            <person name="Enju A."/>
            <person name="Goldsmith A.D."/>
            <person name="Gurjal M."/>
            <person name="Hansen N.F."/>
            <person name="Hayashizaki Y."/>
            <person name="Johnson-Hopson C."/>
            <person name="Hsuan V.W."/>
            <person name="Iida K."/>
            <person name="Karnes M."/>
            <person name="Khan S."/>
            <person name="Koesema E."/>
            <person name="Ishida J."/>
            <person name="Jiang P.X."/>
            <person name="Jones T."/>
            <person name="Kawai J."/>
            <person name="Kamiya A."/>
            <person name="Meyers C."/>
            <person name="Nakajima M."/>
            <person name="Narusaka M."/>
            <person name="Seki M."/>
            <person name="Sakurai T."/>
            <person name="Satou M."/>
            <person name="Tamse R."/>
            <person name="Vaysberg M."/>
            <person name="Wallender E.K."/>
            <person name="Wong C."/>
            <person name="Yamamura Y."/>
            <person name="Yuan S."/>
            <person name="Shinozaki K."/>
            <person name="Davis R.W."/>
            <person name="Theologis A."/>
            <person name="Ecker J.R."/>
        </authorList>
    </citation>
    <scope>NUCLEOTIDE SEQUENCE [LARGE SCALE MRNA]</scope>
    <source>
        <strain>cv. Columbia</strain>
    </source>
</reference>
<reference key="5">
    <citation type="submission" date="2004-09" db="EMBL/GenBank/DDBJ databases">
        <title>Large-scale analysis of RIKEN Arabidopsis full-length (RAFL) cDNAs.</title>
        <authorList>
            <person name="Totoki Y."/>
            <person name="Seki M."/>
            <person name="Ishida J."/>
            <person name="Nakajima M."/>
            <person name="Enju A."/>
            <person name="Kamiya A."/>
            <person name="Narusaka M."/>
            <person name="Shin-i T."/>
            <person name="Nakagawa M."/>
            <person name="Sakamoto N."/>
            <person name="Oishi K."/>
            <person name="Kohara Y."/>
            <person name="Kobayashi M."/>
            <person name="Toyoda A."/>
            <person name="Sakaki Y."/>
            <person name="Sakurai T."/>
            <person name="Iida K."/>
            <person name="Akiyama K."/>
            <person name="Satou M."/>
            <person name="Toyoda T."/>
            <person name="Konagaya A."/>
            <person name="Carninci P."/>
            <person name="Kawai J."/>
            <person name="Hayashizaki Y."/>
            <person name="Shinozaki K."/>
        </authorList>
    </citation>
    <scope>NUCLEOTIDE SEQUENCE [LARGE SCALE MRNA]</scope>
    <source>
        <strain>cv. Columbia</strain>
    </source>
</reference>
<reference key="6">
    <citation type="submission" date="1993-09" db="EMBL/GenBank/DDBJ databases">
        <title>The Arabidopsis thaliana transcribed genome: the GDR cDNA program.</title>
        <authorList>
            <person name="Philipps G."/>
            <person name="Gigot C."/>
        </authorList>
    </citation>
    <scope>NUCLEOTIDE SEQUENCE [MRNA] OF 1-72</scope>
</reference>
<reference key="7">
    <citation type="journal article" date="2001" name="Planta">
        <title>Expression pattern of the Arabidopsis thaliana AtEP3/AtchitIV endochitinase gene.</title>
        <authorList>
            <person name="Passarinho P.A."/>
            <person name="Van Hengel A.J."/>
            <person name="Fransz P.F."/>
            <person name="de Vries S.C."/>
        </authorList>
    </citation>
    <scope>TISSUE SPECIFICITY</scope>
    <scope>DEVELOPMENTAL STAGE</scope>
    <scope>BIOPHYSICOCHEMICAL PROPERTIES</scope>
    <scope>GENE FAMILY</scope>
    <source>
        <strain>cv. Columbia</strain>
        <strain>cv. Landsberg erecta</strain>
    </source>
</reference>
<reference key="8">
    <citation type="journal article" date="2009" name="Biosci. Biotechnol. Biochem.">
        <title>Chitinase gene expression in response to environmental stresses in Arabidopsis thaliana: chitinase inhibitor allosamidin enhances stress tolerance.</title>
        <authorList>
            <person name="Takenaka Y."/>
            <person name="Nakano S."/>
            <person name="Tamoi M."/>
            <person name="Sakuda S."/>
            <person name="Fukamizo T."/>
        </authorList>
    </citation>
    <scope>TISSUE SPECIFICITY</scope>
    <scope>INDUCTION BY WOUNDING</scope>
    <source>
        <strain>cv. Columbia</strain>
    </source>
</reference>
<keyword id="KW-0119">Carbohydrate metabolism</keyword>
<keyword id="KW-0146">Chitin degradation</keyword>
<keyword id="KW-0147">Chitin-binding</keyword>
<keyword id="KW-1015">Disulfide bond</keyword>
<keyword id="KW-0325">Glycoprotein</keyword>
<keyword id="KW-0326">Glycosidase</keyword>
<keyword id="KW-0378">Hydrolase</keyword>
<keyword id="KW-0611">Plant defense</keyword>
<keyword id="KW-0624">Polysaccharide degradation</keyword>
<keyword id="KW-1185">Reference proteome</keyword>
<keyword id="KW-0732">Signal</keyword>
<name>CHI5_ARATH</name>
<sequence>MLTPTISKSISLVTILLVLQAFSNTTKAQNCGCSSELCCSQFGFCGNTSDYCGVGCQQGPCFAPPPANGVSVAEIVTQEFFNGIISQAASSCAGNRFYSRGAFLEALDSYSRFGRVGSTDDSRREIAAFFAHVTHETGHFCYIEEIDGASKDYCDENATQYPCNPNKGYYGRGPIQLSWNFNYGPAGTAIGFDGLNAPETVATDPVISFKTALWYWTNRVQPVISQGFGATIRAINGALECDGANTATVQARVRYYTDYCRQLGVDPGNNLTC</sequence>
<feature type="signal peptide" evidence="2">
    <location>
        <begin position="1"/>
        <end position="28"/>
    </location>
</feature>
<feature type="chain" id="PRO_0000433911" description="Endochitinase EP3" evidence="2">
    <location>
        <begin position="29"/>
        <end position="273"/>
    </location>
</feature>
<feature type="domain" description="Chitin-binding type-1" evidence="3">
    <location>
        <begin position="29"/>
        <end position="63"/>
    </location>
</feature>
<feature type="region of interest" description="Catalytic" evidence="1">
    <location>
        <begin position="70"/>
        <end position="273"/>
    </location>
</feature>
<feature type="active site" description="Proton donor" evidence="1">
    <location>
        <position position="136"/>
    </location>
</feature>
<feature type="glycosylation site" description="N-linked (GlcNAc...) asparagine" evidence="4">
    <location>
        <position position="24"/>
    </location>
</feature>
<feature type="glycosylation site" description="N-linked (GlcNAc...) asparagine" evidence="4">
    <location>
        <position position="47"/>
    </location>
</feature>
<feature type="glycosylation site" description="N-linked (GlcNAc...) asparagine" evidence="4">
    <location>
        <position position="157"/>
    </location>
</feature>
<feature type="glycosylation site" description="N-linked (GlcNAc...) asparagine" evidence="4">
    <location>
        <position position="270"/>
    </location>
</feature>
<feature type="disulfide bond" evidence="3">
    <location>
        <begin position="31"/>
        <end position="39"/>
    </location>
</feature>
<feature type="disulfide bond" evidence="3">
    <location>
        <begin position="33"/>
        <end position="45"/>
    </location>
</feature>
<feature type="disulfide bond" evidence="3">
    <location>
        <begin position="38"/>
        <end position="52"/>
    </location>
</feature>
<feature type="disulfide bond" evidence="3">
    <location>
        <begin position="56"/>
        <end position="61"/>
    </location>
</feature>
<feature type="sequence conflict" description="In Ref. 1; CAA74930." evidence="9" ref="1">
    <original>H</original>
    <variation>RN</variation>
    <location>
        <position position="139"/>
    </location>
</feature>